<protein>
    <recommendedName>
        <fullName evidence="1">NAD(P)H-quinone oxidoreductase subunit 3</fullName>
        <ecNumber evidence="1">7.1.1.-</ecNumber>
    </recommendedName>
    <alternativeName>
        <fullName evidence="1">NAD(P)H dehydrogenase subunit 3</fullName>
    </alternativeName>
    <alternativeName>
        <fullName evidence="1">NADH-plastoquinone oxidoreductase subunit 3</fullName>
    </alternativeName>
    <alternativeName>
        <fullName evidence="1">NDH-1 subunit 3</fullName>
        <shortName evidence="1">NDH-C</shortName>
    </alternativeName>
</protein>
<gene>
    <name evidence="1" type="primary">ndhC</name>
    <name type="ordered locus">Synpcc7942_1180</name>
</gene>
<reference key="1">
    <citation type="submission" date="2002-06" db="EMBL/GenBank/DDBJ databases">
        <title>Synechococcus elongatus PCC7942 cosmid 7G3.</title>
        <authorList>
            <person name="Holtman C.K."/>
            <person name="Sandoval P."/>
            <person name="Chen Y."/>
            <person name="Socias T."/>
            <person name="Mohler B.J."/>
            <person name="McMurtry S."/>
            <person name="Gonzalez A."/>
            <person name="Salinas I."/>
            <person name="Golden S.S."/>
            <person name="Youderian P."/>
        </authorList>
    </citation>
    <scope>NUCLEOTIDE SEQUENCE [GENOMIC DNA]</scope>
</reference>
<reference key="2">
    <citation type="submission" date="2005-08" db="EMBL/GenBank/DDBJ databases">
        <title>Complete sequence of chromosome 1 of Synechococcus elongatus PCC 7942.</title>
        <authorList>
            <consortium name="US DOE Joint Genome Institute"/>
            <person name="Copeland A."/>
            <person name="Lucas S."/>
            <person name="Lapidus A."/>
            <person name="Barry K."/>
            <person name="Detter J.C."/>
            <person name="Glavina T."/>
            <person name="Hammon N."/>
            <person name="Israni S."/>
            <person name="Pitluck S."/>
            <person name="Schmutz J."/>
            <person name="Larimer F."/>
            <person name="Land M."/>
            <person name="Kyrpides N."/>
            <person name="Lykidis A."/>
            <person name="Golden S."/>
            <person name="Richardson P."/>
        </authorList>
    </citation>
    <scope>NUCLEOTIDE SEQUENCE [LARGE SCALE GENOMIC DNA]</scope>
    <source>
        <strain>ATCC 33912 / PCC 7942 / FACHB-805</strain>
    </source>
</reference>
<proteinExistence type="inferred from homology"/>
<feature type="chain" id="PRO_0000362785" description="NAD(P)H-quinone oxidoreductase subunit 3">
    <location>
        <begin position="1"/>
        <end position="133"/>
    </location>
</feature>
<feature type="transmembrane region" description="Helical" evidence="1">
    <location>
        <begin position="12"/>
        <end position="32"/>
    </location>
</feature>
<feature type="transmembrane region" description="Helical" evidence="1">
    <location>
        <begin position="77"/>
        <end position="97"/>
    </location>
</feature>
<feature type="transmembrane region" description="Helical" evidence="1">
    <location>
        <begin position="102"/>
        <end position="122"/>
    </location>
</feature>
<comment type="function">
    <text evidence="1">NDH-1 shuttles electrons from an unknown electron donor, via FMN and iron-sulfur (Fe-S) centers, to quinones in the respiratory and/or the photosynthetic chain. The immediate electron acceptor for the enzyme in this species is believed to be plastoquinone. Couples the redox reaction to proton translocation, and thus conserves the redox energy in a proton gradient. Cyanobacterial NDH-1 also plays a role in inorganic carbon-concentration.</text>
</comment>
<comment type="catalytic activity">
    <reaction evidence="1">
        <text>a plastoquinone + NADH + (n+1) H(+)(in) = a plastoquinol + NAD(+) + n H(+)(out)</text>
        <dbReference type="Rhea" id="RHEA:42608"/>
        <dbReference type="Rhea" id="RHEA-COMP:9561"/>
        <dbReference type="Rhea" id="RHEA-COMP:9562"/>
        <dbReference type="ChEBI" id="CHEBI:15378"/>
        <dbReference type="ChEBI" id="CHEBI:17757"/>
        <dbReference type="ChEBI" id="CHEBI:57540"/>
        <dbReference type="ChEBI" id="CHEBI:57945"/>
        <dbReference type="ChEBI" id="CHEBI:62192"/>
    </reaction>
</comment>
<comment type="catalytic activity">
    <reaction evidence="1">
        <text>a plastoquinone + NADPH + (n+1) H(+)(in) = a plastoquinol + NADP(+) + n H(+)(out)</text>
        <dbReference type="Rhea" id="RHEA:42612"/>
        <dbReference type="Rhea" id="RHEA-COMP:9561"/>
        <dbReference type="Rhea" id="RHEA-COMP:9562"/>
        <dbReference type="ChEBI" id="CHEBI:15378"/>
        <dbReference type="ChEBI" id="CHEBI:17757"/>
        <dbReference type="ChEBI" id="CHEBI:57783"/>
        <dbReference type="ChEBI" id="CHEBI:58349"/>
        <dbReference type="ChEBI" id="CHEBI:62192"/>
    </reaction>
</comment>
<comment type="subunit">
    <text evidence="1">NDH-1 can be composed of about 15 different subunits; different subcomplexes with different compositions have been identified which probably have different functions.</text>
</comment>
<comment type="subcellular location">
    <subcellularLocation>
        <location evidence="1">Cellular thylakoid membrane</location>
        <topology evidence="1">Multi-pass membrane protein</topology>
    </subcellularLocation>
</comment>
<comment type="similarity">
    <text evidence="1">Belongs to the complex I subunit 3 family.</text>
</comment>
<sequence>MAKWNSDCSLEFGVFVLNGYEYLLGFLLISSLVPILSLTASRLLRPGRRGPERRTTYESGMEPIGGAWIQFNVRYYMFALVFVIFDVETVFLYPWAVAFNRLGLLAFVEALIFITILVVGLAYAWRKGALEWS</sequence>
<name>NU3C_SYNE7</name>
<evidence type="ECO:0000255" key="1">
    <source>
        <dbReference type="HAMAP-Rule" id="MF_01394"/>
    </source>
</evidence>
<dbReference type="EC" id="7.1.1.-" evidence="1"/>
<dbReference type="EMBL" id="AY120853">
    <property type="protein sequence ID" value="AAM82724.1"/>
    <property type="molecule type" value="Genomic_DNA"/>
</dbReference>
<dbReference type="EMBL" id="CP000100">
    <property type="protein sequence ID" value="ABB57210.1"/>
    <property type="molecule type" value="Genomic_DNA"/>
</dbReference>
<dbReference type="SMR" id="Q8KPP6"/>
<dbReference type="STRING" id="1140.Synpcc7942_1180"/>
<dbReference type="PaxDb" id="1140-Synpcc7942_1180"/>
<dbReference type="KEGG" id="syf:Synpcc7942_1180"/>
<dbReference type="eggNOG" id="COG0838">
    <property type="taxonomic scope" value="Bacteria"/>
</dbReference>
<dbReference type="HOGENOM" id="CLU_119549_1_1_3"/>
<dbReference type="BioCyc" id="MetaCyc:SYNPCC7942_1180-MONOMER"/>
<dbReference type="BioCyc" id="SYNEL:SYNPCC7942_1180-MONOMER"/>
<dbReference type="Proteomes" id="UP000889800">
    <property type="component" value="Chromosome"/>
</dbReference>
<dbReference type="GO" id="GO:0030964">
    <property type="term" value="C:NADH dehydrogenase complex"/>
    <property type="evidence" value="ECO:0007669"/>
    <property type="project" value="TreeGrafter"/>
</dbReference>
<dbReference type="GO" id="GO:0031676">
    <property type="term" value="C:plasma membrane-derived thylakoid membrane"/>
    <property type="evidence" value="ECO:0007669"/>
    <property type="project" value="UniProtKB-SubCell"/>
</dbReference>
<dbReference type="GO" id="GO:0008137">
    <property type="term" value="F:NADH dehydrogenase (ubiquinone) activity"/>
    <property type="evidence" value="ECO:0007669"/>
    <property type="project" value="InterPro"/>
</dbReference>
<dbReference type="GO" id="GO:0048038">
    <property type="term" value="F:quinone binding"/>
    <property type="evidence" value="ECO:0007669"/>
    <property type="project" value="UniProtKB-KW"/>
</dbReference>
<dbReference type="GO" id="GO:0019684">
    <property type="term" value="P:photosynthesis, light reaction"/>
    <property type="evidence" value="ECO:0007669"/>
    <property type="project" value="UniProtKB-UniRule"/>
</dbReference>
<dbReference type="FunFam" id="1.20.58.1610:FF:000001">
    <property type="entry name" value="NAD(P)H-quinone oxidoreductase subunit 3, chloroplastic"/>
    <property type="match status" value="1"/>
</dbReference>
<dbReference type="Gene3D" id="1.20.58.1610">
    <property type="entry name" value="NADH:ubiquinone/plastoquinone oxidoreductase, chain 3"/>
    <property type="match status" value="1"/>
</dbReference>
<dbReference type="HAMAP" id="MF_01394">
    <property type="entry name" value="NDH1_NuoA"/>
    <property type="match status" value="1"/>
</dbReference>
<dbReference type="InterPro" id="IPR023043">
    <property type="entry name" value="NAD(P)H_OxRDtase_bac/plastid"/>
</dbReference>
<dbReference type="InterPro" id="IPR000440">
    <property type="entry name" value="NADH_UbQ/plastoQ_OxRdtase_su3"/>
</dbReference>
<dbReference type="InterPro" id="IPR038430">
    <property type="entry name" value="NDAH_ubi_oxred_su3_sf"/>
</dbReference>
<dbReference type="PANTHER" id="PTHR11058">
    <property type="entry name" value="NADH-UBIQUINONE OXIDOREDUCTASE CHAIN 3"/>
    <property type="match status" value="1"/>
</dbReference>
<dbReference type="PANTHER" id="PTHR11058:SF9">
    <property type="entry name" value="NADH-UBIQUINONE OXIDOREDUCTASE CHAIN 3"/>
    <property type="match status" value="1"/>
</dbReference>
<dbReference type="Pfam" id="PF00507">
    <property type="entry name" value="Oxidored_q4"/>
    <property type="match status" value="1"/>
</dbReference>
<accession>Q8KPP6</accession>
<organism>
    <name type="scientific">Synechococcus elongatus (strain ATCC 33912 / PCC 7942 / FACHB-805)</name>
    <name type="common">Anacystis nidulans R2</name>
    <dbReference type="NCBI Taxonomy" id="1140"/>
    <lineage>
        <taxon>Bacteria</taxon>
        <taxon>Bacillati</taxon>
        <taxon>Cyanobacteriota</taxon>
        <taxon>Cyanophyceae</taxon>
        <taxon>Synechococcales</taxon>
        <taxon>Synechococcaceae</taxon>
        <taxon>Synechococcus</taxon>
    </lineage>
</organism>
<keyword id="KW-0472">Membrane</keyword>
<keyword id="KW-0520">NAD</keyword>
<keyword id="KW-0521">NADP</keyword>
<keyword id="KW-0618">Plastoquinone</keyword>
<keyword id="KW-0874">Quinone</keyword>
<keyword id="KW-1185">Reference proteome</keyword>
<keyword id="KW-0793">Thylakoid</keyword>
<keyword id="KW-1278">Translocase</keyword>
<keyword id="KW-0812">Transmembrane</keyword>
<keyword id="KW-1133">Transmembrane helix</keyword>
<keyword id="KW-0813">Transport</keyword>